<proteinExistence type="inferred from homology"/>
<sequence>MSNKINPKRREPTAAAAGAGATGVATNTSTSTGSSSAGNTSSANTSSSSSSSLSSAGGGDAGMSADLTSLFECPVCFDYVLPPILQCSSGHLVCVSCRSKLTCCPTCRGPLANIRNLAMEKVASNVKFPCKHSGYGCTASLVYTEKTEHEETCECRPYLCPCPGASCKWQGPLDLVMQHLMMSHKSITTLQGEDIVFLATDINLPGAVDWVMMQSCFGHHFMLVLEKQEKYDGHQQFFAIVQLIGSRKEAENFVYRLELNGNRRRLTWEAMPRSIHEGVASAIHNSDCLVFDTSIAQLFADNGNLGINVTISLV</sequence>
<feature type="chain" id="PRO_0000056174" description="E3 ubiquitin-protein ligase sina">
    <location>
        <begin position="1"/>
        <end position="314"/>
    </location>
</feature>
<feature type="zinc finger region" description="RING-type" evidence="3">
    <location>
        <begin position="73"/>
        <end position="108"/>
    </location>
</feature>
<feature type="zinc finger region" description="SIAH-type" evidence="4">
    <location>
        <begin position="125"/>
        <end position="185"/>
    </location>
</feature>
<feature type="region of interest" description="Disordered" evidence="5">
    <location>
        <begin position="1"/>
        <end position="55"/>
    </location>
</feature>
<feature type="region of interest" description="SBD">
    <location>
        <begin position="122"/>
        <end position="314"/>
    </location>
</feature>
<feature type="compositionally biased region" description="Low complexity" evidence="5">
    <location>
        <begin position="13"/>
        <end position="55"/>
    </location>
</feature>
<feature type="binding site" evidence="1">
    <location>
        <position position="130"/>
    </location>
    <ligand>
        <name>Zn(2+)</name>
        <dbReference type="ChEBI" id="CHEBI:29105"/>
        <label>1</label>
    </ligand>
</feature>
<feature type="binding site" evidence="1">
    <location>
        <position position="137"/>
    </location>
    <ligand>
        <name>Zn(2+)</name>
        <dbReference type="ChEBI" id="CHEBI:29105"/>
        <label>1</label>
    </ligand>
</feature>
<feature type="binding site" evidence="1">
    <location>
        <position position="149"/>
    </location>
    <ligand>
        <name>Zn(2+)</name>
        <dbReference type="ChEBI" id="CHEBI:29105"/>
        <label>1</label>
    </ligand>
</feature>
<feature type="binding site" evidence="1">
    <location>
        <position position="153"/>
    </location>
    <ligand>
        <name>Zn(2+)</name>
        <dbReference type="ChEBI" id="CHEBI:29105"/>
        <label>1</label>
    </ligand>
</feature>
<feature type="binding site" evidence="1">
    <location>
        <position position="160"/>
    </location>
    <ligand>
        <name>Zn(2+)</name>
        <dbReference type="ChEBI" id="CHEBI:29105"/>
        <label>2</label>
    </ligand>
</feature>
<feature type="binding site" evidence="1">
    <location>
        <position position="167"/>
    </location>
    <ligand>
        <name>Zn(2+)</name>
        <dbReference type="ChEBI" id="CHEBI:29105"/>
        <label>2</label>
    </ligand>
</feature>
<feature type="binding site" evidence="1">
    <location>
        <position position="179"/>
    </location>
    <ligand>
        <name>Zn(2+)</name>
        <dbReference type="ChEBI" id="CHEBI:29105"/>
        <label>2</label>
    </ligand>
</feature>
<feature type="binding site" evidence="1">
    <location>
        <position position="184"/>
    </location>
    <ligand>
        <name>Zn(2+)</name>
        <dbReference type="ChEBI" id="CHEBI:29105"/>
        <label>2</label>
    </ligand>
</feature>
<organism>
    <name type="scientific">Drosophila erecta</name>
    <name type="common">Fruit fly</name>
    <dbReference type="NCBI Taxonomy" id="7220"/>
    <lineage>
        <taxon>Eukaryota</taxon>
        <taxon>Metazoa</taxon>
        <taxon>Ecdysozoa</taxon>
        <taxon>Arthropoda</taxon>
        <taxon>Hexapoda</taxon>
        <taxon>Insecta</taxon>
        <taxon>Pterygota</taxon>
        <taxon>Neoptera</taxon>
        <taxon>Endopterygota</taxon>
        <taxon>Diptera</taxon>
        <taxon>Brachycera</taxon>
        <taxon>Muscomorpha</taxon>
        <taxon>Ephydroidea</taxon>
        <taxon>Drosophilidae</taxon>
        <taxon>Drosophila</taxon>
        <taxon>Sophophora</taxon>
    </lineage>
</organism>
<evidence type="ECO:0000250" key="1"/>
<evidence type="ECO:0000250" key="2">
    <source>
        <dbReference type="UniProtKB" id="P21461"/>
    </source>
</evidence>
<evidence type="ECO:0000255" key="3">
    <source>
        <dbReference type="PROSITE-ProRule" id="PRU00175"/>
    </source>
</evidence>
<evidence type="ECO:0000255" key="4">
    <source>
        <dbReference type="PROSITE-ProRule" id="PRU00455"/>
    </source>
</evidence>
<evidence type="ECO:0000256" key="5">
    <source>
        <dbReference type="SAM" id="MobiDB-lite"/>
    </source>
</evidence>
<evidence type="ECO:0000305" key="6"/>
<keyword id="KW-0963">Cytoplasm</keyword>
<keyword id="KW-0217">Developmental protein</keyword>
<keyword id="KW-0479">Metal-binding</keyword>
<keyword id="KW-0539">Nucleus</keyword>
<keyword id="KW-0716">Sensory transduction</keyword>
<keyword id="KW-0808">Transferase</keyword>
<keyword id="KW-0833">Ubl conjugation pathway</keyword>
<keyword id="KW-0844">Vision</keyword>
<keyword id="KW-0862">Zinc</keyword>
<keyword id="KW-0863">Zinc-finger</keyword>
<accession>P61093</accession>
<accession>B3NDG7</accession>
<dbReference type="EC" id="2.3.2.27"/>
<dbReference type="EMBL" id="AY190936">
    <property type="protein sequence ID" value="AAO00989.1"/>
    <property type="molecule type" value="Genomic_DNA"/>
</dbReference>
<dbReference type="EMBL" id="CH954178">
    <property type="protein sequence ID" value="EDV52029.1"/>
    <property type="molecule type" value="Genomic_DNA"/>
</dbReference>
<dbReference type="SMR" id="P61093"/>
<dbReference type="EnsemblMetazoa" id="FBtr0133638">
    <property type="protein sequence ID" value="FBpp0132130"/>
    <property type="gene ID" value="FBgn0064599"/>
</dbReference>
<dbReference type="EnsemblMetazoa" id="XM_001972967.3">
    <property type="protein sequence ID" value="XP_001973003.1"/>
    <property type="gene ID" value="LOC6544148"/>
</dbReference>
<dbReference type="GeneID" id="6544148"/>
<dbReference type="KEGG" id="der:6544148"/>
<dbReference type="CTD" id="39884"/>
<dbReference type="eggNOG" id="KOG3002">
    <property type="taxonomic scope" value="Eukaryota"/>
</dbReference>
<dbReference type="HOGENOM" id="CLU_028215_0_0_1"/>
<dbReference type="OMA" id="HSNTGCT"/>
<dbReference type="OrthoDB" id="941555at2759"/>
<dbReference type="PhylomeDB" id="P61093"/>
<dbReference type="UniPathway" id="UPA00143"/>
<dbReference type="Proteomes" id="UP000008711">
    <property type="component" value="Unassembled WGS sequence"/>
</dbReference>
<dbReference type="GO" id="GO:0005829">
    <property type="term" value="C:cytosol"/>
    <property type="evidence" value="ECO:0007669"/>
    <property type="project" value="EnsemblMetazoa"/>
</dbReference>
<dbReference type="GO" id="GO:0005634">
    <property type="term" value="C:nucleus"/>
    <property type="evidence" value="ECO:0000250"/>
    <property type="project" value="UniProtKB"/>
</dbReference>
<dbReference type="GO" id="GO:0000151">
    <property type="term" value="C:ubiquitin ligase complex"/>
    <property type="evidence" value="ECO:0007669"/>
    <property type="project" value="EnsemblMetazoa"/>
</dbReference>
<dbReference type="GO" id="GO:0042802">
    <property type="term" value="F:identical protein binding"/>
    <property type="evidence" value="ECO:0007669"/>
    <property type="project" value="EnsemblMetazoa"/>
</dbReference>
<dbReference type="GO" id="GO:0031624">
    <property type="term" value="F:ubiquitin conjugating enzyme binding"/>
    <property type="evidence" value="ECO:0007669"/>
    <property type="project" value="TreeGrafter"/>
</dbReference>
<dbReference type="GO" id="GO:0061630">
    <property type="term" value="F:ubiquitin protein ligase activity"/>
    <property type="evidence" value="ECO:0007669"/>
    <property type="project" value="EnsemblMetazoa"/>
</dbReference>
<dbReference type="GO" id="GO:0008270">
    <property type="term" value="F:zinc ion binding"/>
    <property type="evidence" value="ECO:0007669"/>
    <property type="project" value="UniProtKB-KW"/>
</dbReference>
<dbReference type="GO" id="GO:0035883">
    <property type="term" value="P:enteroendocrine cell differentiation"/>
    <property type="evidence" value="ECO:0007669"/>
    <property type="project" value="EnsemblMetazoa"/>
</dbReference>
<dbReference type="GO" id="GO:0032436">
    <property type="term" value="P:positive regulation of proteasomal ubiquitin-dependent protein catabolic process"/>
    <property type="evidence" value="ECO:0007669"/>
    <property type="project" value="EnsemblMetazoa"/>
</dbReference>
<dbReference type="GO" id="GO:0043161">
    <property type="term" value="P:proteasome-mediated ubiquitin-dependent protein catabolic process"/>
    <property type="evidence" value="ECO:0007669"/>
    <property type="project" value="EnsemblMetazoa"/>
</dbReference>
<dbReference type="GO" id="GO:0016567">
    <property type="term" value="P:protein ubiquitination"/>
    <property type="evidence" value="ECO:0007669"/>
    <property type="project" value="UniProtKB-UniPathway"/>
</dbReference>
<dbReference type="GO" id="GO:0045676">
    <property type="term" value="P:regulation of R7 cell differentiation"/>
    <property type="evidence" value="ECO:0000250"/>
    <property type="project" value="UniProtKB"/>
</dbReference>
<dbReference type="GO" id="GO:0007423">
    <property type="term" value="P:sensory organ development"/>
    <property type="evidence" value="ECO:0000250"/>
    <property type="project" value="UniProtKB"/>
</dbReference>
<dbReference type="GO" id="GO:0045500">
    <property type="term" value="P:sevenless signaling pathway"/>
    <property type="evidence" value="ECO:0007669"/>
    <property type="project" value="EnsemblMetazoa"/>
</dbReference>
<dbReference type="GO" id="GO:0006511">
    <property type="term" value="P:ubiquitin-dependent protein catabolic process"/>
    <property type="evidence" value="ECO:0000250"/>
    <property type="project" value="UniProtKB"/>
</dbReference>
<dbReference type="GO" id="GO:0007601">
    <property type="term" value="P:visual perception"/>
    <property type="evidence" value="ECO:0007669"/>
    <property type="project" value="UniProtKB-KW"/>
</dbReference>
<dbReference type="CDD" id="cd03829">
    <property type="entry name" value="Sina"/>
    <property type="match status" value="1"/>
</dbReference>
<dbReference type="FunFam" id="2.60.210.10:FF:000002">
    <property type="entry name" value="E3 ubiquitin-protein ligase"/>
    <property type="match status" value="1"/>
</dbReference>
<dbReference type="FunFam" id="3.30.40.10:FF:000823">
    <property type="entry name" value="E3 ubiquitin-protein ligase"/>
    <property type="match status" value="1"/>
</dbReference>
<dbReference type="FunFam" id="3.30.40.10:FF:000041">
    <property type="entry name" value="E3 ubiquitin-protein ligase SINAT3"/>
    <property type="match status" value="1"/>
</dbReference>
<dbReference type="Gene3D" id="2.60.210.10">
    <property type="entry name" value="Apoptosis, Tumor Necrosis Factor Receptor Associated Protein 2, Chain A"/>
    <property type="match status" value="1"/>
</dbReference>
<dbReference type="Gene3D" id="3.30.40.10">
    <property type="entry name" value="Zinc/RING finger domain, C3HC4 (zinc finger)"/>
    <property type="match status" value="2"/>
</dbReference>
<dbReference type="InterPro" id="IPR018121">
    <property type="entry name" value="7-in-absentia-prot_TRAF-dom"/>
</dbReference>
<dbReference type="InterPro" id="IPR004162">
    <property type="entry name" value="SINA-like_animal"/>
</dbReference>
<dbReference type="InterPro" id="IPR049548">
    <property type="entry name" value="Sina-like_RING"/>
</dbReference>
<dbReference type="InterPro" id="IPR008974">
    <property type="entry name" value="TRAF-like"/>
</dbReference>
<dbReference type="InterPro" id="IPR001841">
    <property type="entry name" value="Znf_RING"/>
</dbReference>
<dbReference type="InterPro" id="IPR013083">
    <property type="entry name" value="Znf_RING/FYVE/PHD"/>
</dbReference>
<dbReference type="InterPro" id="IPR013010">
    <property type="entry name" value="Znf_SIAH"/>
</dbReference>
<dbReference type="PANTHER" id="PTHR45877">
    <property type="entry name" value="E3 UBIQUITIN-PROTEIN LIGASE SIAH2"/>
    <property type="match status" value="1"/>
</dbReference>
<dbReference type="PANTHER" id="PTHR45877:SF2">
    <property type="entry name" value="E3 UBIQUITIN-PROTEIN LIGASE SINA-RELATED"/>
    <property type="match status" value="1"/>
</dbReference>
<dbReference type="Pfam" id="PF21362">
    <property type="entry name" value="Sina_RING"/>
    <property type="match status" value="1"/>
</dbReference>
<dbReference type="Pfam" id="PF03145">
    <property type="entry name" value="Sina_TRAF"/>
    <property type="match status" value="1"/>
</dbReference>
<dbReference type="Pfam" id="PF21361">
    <property type="entry name" value="Sina_ZnF"/>
    <property type="match status" value="1"/>
</dbReference>
<dbReference type="SUPFAM" id="SSF57850">
    <property type="entry name" value="RING/U-box"/>
    <property type="match status" value="1"/>
</dbReference>
<dbReference type="SUPFAM" id="SSF49599">
    <property type="entry name" value="TRAF domain-like"/>
    <property type="match status" value="1"/>
</dbReference>
<dbReference type="PROSITE" id="PS50089">
    <property type="entry name" value="ZF_RING_2"/>
    <property type="match status" value="1"/>
</dbReference>
<dbReference type="PROSITE" id="PS51081">
    <property type="entry name" value="ZF_SIAH"/>
    <property type="match status" value="1"/>
</dbReference>
<comment type="function">
    <text evidence="2">E3 ubiquitin-protein ligase that is required for specification of R7 photoreceptor cell fate in the eye by mediating the ubiquitination and subsequent proteasomal degradation of Tramtrack (ttk). E3 Ubiquitin ligases accept ubiquitin from an E2 ubiquitin-conjugating enzyme in the form of a thioester and then directly transfers the ubiquitin to targeted substrates. Acts via the formation of a complex with ebi and phyl that ubiquitinates the transcription repressor ttk, a general inhibitor of photoreceptor differentiation, in a subset of photoreceptor cells in the eye, leading to the differentiation of cells into neurons. Also involved in external sensory organ development.</text>
</comment>
<comment type="catalytic activity">
    <reaction>
        <text>S-ubiquitinyl-[E2 ubiquitin-conjugating enzyme]-L-cysteine + [acceptor protein]-L-lysine = [E2 ubiquitin-conjugating enzyme]-L-cysteine + N(6)-ubiquitinyl-[acceptor protein]-L-lysine.</text>
        <dbReference type="EC" id="2.3.2.27"/>
    </reaction>
</comment>
<comment type="pathway">
    <text>Protein modification; protein ubiquitination.</text>
</comment>
<comment type="subunit">
    <text evidence="2">Component of some E3 complex at least composed of sina, ebi and phyl. Interacts with eff.</text>
</comment>
<comment type="subcellular location">
    <subcellularLocation>
        <location evidence="2">Cytoplasm</location>
    </subcellularLocation>
    <subcellularLocation>
        <location evidence="2">Nucleus</location>
    </subcellularLocation>
</comment>
<comment type="domain">
    <text evidence="1">The RING-type zinc finger domain is essential for ubiquitin ligase activity.</text>
</comment>
<comment type="domain">
    <text evidence="1">The SBD domain (substrate-binding domain) mediates the interaction with substrate proteins. It is related to the TRAF family.</text>
</comment>
<comment type="similarity">
    <text evidence="6">Belongs to the SINA (Seven in absentia) family.</text>
</comment>
<protein>
    <recommendedName>
        <fullName>E3 ubiquitin-protein ligase sina</fullName>
        <ecNumber>2.3.2.27</ecNumber>
    </recommendedName>
    <alternativeName>
        <fullName evidence="6">RING-type E3 ubiquitin transferase sina</fullName>
    </alternativeName>
    <alternativeName>
        <fullName>Seven in absentia protein</fullName>
    </alternativeName>
</protein>
<reference key="1">
    <citation type="journal article" date="2002" name="Genome Biol.">
        <title>Assessing the impact of comparative genomic sequence data on the functional annotation of the Drosophila genome.</title>
        <authorList>
            <person name="Bergman C.M."/>
            <person name="Pfeiffer B.D."/>
            <person name="Rincon-Limas D.E."/>
            <person name="Hoskins R.A."/>
            <person name="Gnirke A."/>
            <person name="Mungall C.J."/>
            <person name="Wang A.M."/>
            <person name="Kronmiller B."/>
            <person name="Pacleb J.M."/>
            <person name="Park S."/>
            <person name="Stapleton M."/>
            <person name="Wan K.H."/>
            <person name="George R.A."/>
            <person name="de Jong P.J."/>
            <person name="Botas J."/>
            <person name="Rubin G.M."/>
            <person name="Celniker S.E."/>
        </authorList>
    </citation>
    <scope>NUCLEOTIDE SEQUENCE [GENOMIC DNA]</scope>
    <source>
        <strain>Tucson 14021-0224.0</strain>
    </source>
</reference>
<reference key="2">
    <citation type="journal article" date="2007" name="Nature">
        <title>Evolution of genes and genomes on the Drosophila phylogeny.</title>
        <authorList>
            <consortium name="Drosophila 12 genomes consortium"/>
        </authorList>
    </citation>
    <scope>NUCLEOTIDE SEQUENCE [LARGE SCALE GENOMIC DNA]</scope>
    <source>
        <strain>Tucson 14021-0224.01</strain>
    </source>
</reference>
<gene>
    <name type="primary">sina</name>
    <name type="ORF">GG13584</name>
</gene>
<name>SINA_DROER</name>